<dbReference type="EMBL" id="CP000157">
    <property type="protein sequence ID" value="ABC63847.1"/>
    <property type="molecule type" value="Genomic_DNA"/>
</dbReference>
<dbReference type="RefSeq" id="WP_011414677.1">
    <property type="nucleotide sequence ID" value="NC_007722.1"/>
</dbReference>
<dbReference type="SMR" id="Q2N8Z4"/>
<dbReference type="STRING" id="314225.ELI_08775"/>
<dbReference type="KEGG" id="eli:ELI_08775"/>
<dbReference type="eggNOG" id="COG0224">
    <property type="taxonomic scope" value="Bacteria"/>
</dbReference>
<dbReference type="HOGENOM" id="CLU_050669_0_1_5"/>
<dbReference type="OrthoDB" id="9812769at2"/>
<dbReference type="Proteomes" id="UP000008808">
    <property type="component" value="Chromosome"/>
</dbReference>
<dbReference type="GO" id="GO:0005886">
    <property type="term" value="C:plasma membrane"/>
    <property type="evidence" value="ECO:0007669"/>
    <property type="project" value="UniProtKB-SubCell"/>
</dbReference>
<dbReference type="GO" id="GO:0045259">
    <property type="term" value="C:proton-transporting ATP synthase complex"/>
    <property type="evidence" value="ECO:0007669"/>
    <property type="project" value="UniProtKB-KW"/>
</dbReference>
<dbReference type="GO" id="GO:0005524">
    <property type="term" value="F:ATP binding"/>
    <property type="evidence" value="ECO:0007669"/>
    <property type="project" value="UniProtKB-UniRule"/>
</dbReference>
<dbReference type="GO" id="GO:0046933">
    <property type="term" value="F:proton-transporting ATP synthase activity, rotational mechanism"/>
    <property type="evidence" value="ECO:0007669"/>
    <property type="project" value="UniProtKB-UniRule"/>
</dbReference>
<dbReference type="GO" id="GO:0042777">
    <property type="term" value="P:proton motive force-driven plasma membrane ATP synthesis"/>
    <property type="evidence" value="ECO:0007669"/>
    <property type="project" value="UniProtKB-UniRule"/>
</dbReference>
<dbReference type="CDD" id="cd12151">
    <property type="entry name" value="F1-ATPase_gamma"/>
    <property type="match status" value="1"/>
</dbReference>
<dbReference type="FunFam" id="1.10.287.80:FF:000001">
    <property type="entry name" value="ATP synthase gamma chain"/>
    <property type="match status" value="1"/>
</dbReference>
<dbReference type="Gene3D" id="3.40.1380.10">
    <property type="match status" value="1"/>
</dbReference>
<dbReference type="Gene3D" id="1.10.287.80">
    <property type="entry name" value="ATP synthase, gamma subunit, helix hairpin domain"/>
    <property type="match status" value="1"/>
</dbReference>
<dbReference type="HAMAP" id="MF_00815">
    <property type="entry name" value="ATP_synth_gamma_bact"/>
    <property type="match status" value="1"/>
</dbReference>
<dbReference type="InterPro" id="IPR035968">
    <property type="entry name" value="ATP_synth_F1_ATPase_gsu"/>
</dbReference>
<dbReference type="InterPro" id="IPR000131">
    <property type="entry name" value="ATP_synth_F1_gsu"/>
</dbReference>
<dbReference type="InterPro" id="IPR023632">
    <property type="entry name" value="ATP_synth_F1_gsu_CS"/>
</dbReference>
<dbReference type="NCBIfam" id="TIGR01146">
    <property type="entry name" value="ATPsyn_F1gamma"/>
    <property type="match status" value="1"/>
</dbReference>
<dbReference type="NCBIfam" id="NF004146">
    <property type="entry name" value="PRK05621.1-4"/>
    <property type="match status" value="1"/>
</dbReference>
<dbReference type="PANTHER" id="PTHR11693">
    <property type="entry name" value="ATP SYNTHASE GAMMA CHAIN"/>
    <property type="match status" value="1"/>
</dbReference>
<dbReference type="PANTHER" id="PTHR11693:SF22">
    <property type="entry name" value="ATP SYNTHASE SUBUNIT GAMMA, MITOCHONDRIAL"/>
    <property type="match status" value="1"/>
</dbReference>
<dbReference type="Pfam" id="PF00231">
    <property type="entry name" value="ATP-synt"/>
    <property type="match status" value="1"/>
</dbReference>
<dbReference type="PIRSF" id="PIRSF039089">
    <property type="entry name" value="ATP_synthase_gamma"/>
    <property type="match status" value="1"/>
</dbReference>
<dbReference type="PRINTS" id="PR00126">
    <property type="entry name" value="ATPASEGAMMA"/>
</dbReference>
<dbReference type="SUPFAM" id="SSF52943">
    <property type="entry name" value="ATP synthase (F1-ATPase), gamma subunit"/>
    <property type="match status" value="1"/>
</dbReference>
<dbReference type="PROSITE" id="PS00153">
    <property type="entry name" value="ATPASE_GAMMA"/>
    <property type="match status" value="1"/>
</dbReference>
<evidence type="ECO:0000255" key="1">
    <source>
        <dbReference type="HAMAP-Rule" id="MF_00815"/>
    </source>
</evidence>
<accession>Q2N8Z4</accession>
<protein>
    <recommendedName>
        <fullName evidence="1">ATP synthase gamma chain</fullName>
    </recommendedName>
    <alternativeName>
        <fullName evidence="1">ATP synthase F1 sector gamma subunit</fullName>
    </alternativeName>
    <alternativeName>
        <fullName evidence="1">F-ATPase gamma subunit</fullName>
    </alternativeName>
</protein>
<feature type="chain" id="PRO_1000053210" description="ATP synthase gamma chain">
    <location>
        <begin position="1"/>
        <end position="290"/>
    </location>
</feature>
<organism>
    <name type="scientific">Erythrobacter litoralis (strain HTCC2594)</name>
    <dbReference type="NCBI Taxonomy" id="314225"/>
    <lineage>
        <taxon>Bacteria</taxon>
        <taxon>Pseudomonadati</taxon>
        <taxon>Pseudomonadota</taxon>
        <taxon>Alphaproteobacteria</taxon>
        <taxon>Sphingomonadales</taxon>
        <taxon>Erythrobacteraceae</taxon>
        <taxon>Erythrobacter/Porphyrobacter group</taxon>
        <taxon>Erythrobacter</taxon>
    </lineage>
</organism>
<gene>
    <name evidence="1" type="primary">atpG</name>
    <name type="ordered locus">ELI_08775</name>
</gene>
<sequence length="290" mass="31226">MASLKELKDRIGSVKSTQKITKAKQMVAAAKLRRAQANAEAARPYAERLADVMASLAGKVSGDSAPRLLAGSGNDQKHLLVVVNTDKGLCGGLNSNIVKEAKAQAKKLIAAGKDVQFYLVGKKGRAPIKRDYEKQIAKHFDTSTVKQPGFEEADAIANELIDMFEAGEFDVAHLVYPTFKSALVQDPTTNQLIPVPSPEGEGTGGDAVVEYEPGEEEILEELLPRYVKTQLFGALLEREASEQGASMTAMDNATRNAGDLINKLTIQYNRSRQAAITTELIEIIAGAEAL</sequence>
<keyword id="KW-0066">ATP synthesis</keyword>
<keyword id="KW-0997">Cell inner membrane</keyword>
<keyword id="KW-1003">Cell membrane</keyword>
<keyword id="KW-0139">CF(1)</keyword>
<keyword id="KW-0375">Hydrogen ion transport</keyword>
<keyword id="KW-0406">Ion transport</keyword>
<keyword id="KW-0472">Membrane</keyword>
<keyword id="KW-1185">Reference proteome</keyword>
<keyword id="KW-0813">Transport</keyword>
<reference key="1">
    <citation type="journal article" date="2009" name="J. Bacteriol.">
        <title>Complete genome sequence of Erythrobacter litoralis HTCC2594.</title>
        <authorList>
            <person name="Oh H.M."/>
            <person name="Giovannoni S.J."/>
            <person name="Ferriera S."/>
            <person name="Johnson J."/>
            <person name="Cho J.C."/>
        </authorList>
    </citation>
    <scope>NUCLEOTIDE SEQUENCE [LARGE SCALE GENOMIC DNA]</scope>
    <source>
        <strain>HTCC2594</strain>
    </source>
</reference>
<proteinExistence type="inferred from homology"/>
<name>ATPG_ERYLH</name>
<comment type="function">
    <text evidence="1">Produces ATP from ADP in the presence of a proton gradient across the membrane. The gamma chain is believed to be important in regulating ATPase activity and the flow of protons through the CF(0) complex.</text>
</comment>
<comment type="subunit">
    <text evidence="1">F-type ATPases have 2 components, CF(1) - the catalytic core - and CF(0) - the membrane proton channel. CF(1) has five subunits: alpha(3), beta(3), gamma(1), delta(1), epsilon(1). CF(0) has three main subunits: a, b and c.</text>
</comment>
<comment type="subcellular location">
    <subcellularLocation>
        <location evidence="1">Cell inner membrane</location>
        <topology evidence="1">Peripheral membrane protein</topology>
    </subcellularLocation>
</comment>
<comment type="similarity">
    <text evidence="1">Belongs to the ATPase gamma chain family.</text>
</comment>